<proteinExistence type="evidence at protein level"/>
<feature type="chain" id="PRO_0000105085" description="Concanavalin-Br">
    <location>
        <begin position="1"/>
        <end position="237"/>
    </location>
</feature>
<feature type="binding site">
    <location>
        <position position="8"/>
    </location>
    <ligand>
        <name>Mn(2+)</name>
        <dbReference type="ChEBI" id="CHEBI:29035"/>
    </ligand>
</feature>
<feature type="binding site">
    <location>
        <position position="10"/>
    </location>
    <ligand>
        <name>Ca(2+)</name>
        <dbReference type="ChEBI" id="CHEBI:29108"/>
    </ligand>
</feature>
<feature type="binding site">
    <location>
        <position position="10"/>
    </location>
    <ligand>
        <name>Mn(2+)</name>
        <dbReference type="ChEBI" id="CHEBI:29035"/>
    </ligand>
</feature>
<feature type="binding site" evidence="2">
    <location>
        <position position="12"/>
    </location>
    <ligand>
        <name>a carbohydrate</name>
        <dbReference type="ChEBI" id="CHEBI:16646"/>
    </ligand>
</feature>
<feature type="binding site">
    <location>
        <position position="12"/>
    </location>
    <ligand>
        <name>Ca(2+)</name>
        <dbReference type="ChEBI" id="CHEBI:29108"/>
    </ligand>
</feature>
<feature type="binding site">
    <location>
        <position position="14"/>
    </location>
    <ligand>
        <name>Ca(2+)</name>
        <dbReference type="ChEBI" id="CHEBI:29108"/>
    </ligand>
</feature>
<feature type="binding site">
    <location>
        <position position="19"/>
    </location>
    <ligand>
        <name>Ca(2+)</name>
        <dbReference type="ChEBI" id="CHEBI:29108"/>
    </ligand>
</feature>
<feature type="binding site">
    <location>
        <position position="19"/>
    </location>
    <ligand>
        <name>Mn(2+)</name>
        <dbReference type="ChEBI" id="CHEBI:29035"/>
    </ligand>
</feature>
<feature type="binding site">
    <location>
        <position position="24"/>
    </location>
    <ligand>
        <name>Mn(2+)</name>
        <dbReference type="ChEBI" id="CHEBI:29035"/>
    </ligand>
</feature>
<feature type="binding site" evidence="1">
    <location>
        <position position="34"/>
    </location>
    <ligand>
        <name>Mn(2+)</name>
        <dbReference type="ChEBI" id="CHEBI:29035"/>
    </ligand>
</feature>
<feature type="binding site">
    <location>
        <begin position="99"/>
        <end position="100"/>
    </location>
    <ligand>
        <name>a carbohydrate</name>
        <dbReference type="ChEBI" id="CHEBI:16646"/>
    </ligand>
</feature>
<feature type="binding site" evidence="1">
    <location>
        <position position="208"/>
    </location>
    <ligand>
        <name>Ca(2+)</name>
        <dbReference type="ChEBI" id="CHEBI:29108"/>
    </ligand>
</feature>
<feature type="binding site" evidence="2">
    <location>
        <position position="228"/>
    </location>
    <ligand>
        <name>a carbohydrate</name>
        <dbReference type="ChEBI" id="CHEBI:16646"/>
    </ligand>
</feature>
<feature type="strand" evidence="13">
    <location>
        <begin position="4"/>
        <end position="10"/>
    </location>
</feature>
<feature type="helix" evidence="13">
    <location>
        <begin position="15"/>
        <end position="17"/>
    </location>
</feature>
<feature type="strand" evidence="13">
    <location>
        <begin position="24"/>
        <end position="33"/>
    </location>
</feature>
<feature type="strand" evidence="13">
    <location>
        <begin position="35"/>
        <end position="39"/>
    </location>
</feature>
<feature type="strand" evidence="13">
    <location>
        <begin position="46"/>
        <end position="55"/>
    </location>
</feature>
<feature type="turn" evidence="13">
    <location>
        <begin position="56"/>
        <end position="59"/>
    </location>
</feature>
<feature type="strand" evidence="13">
    <location>
        <begin position="60"/>
        <end position="66"/>
    </location>
</feature>
<feature type="strand" evidence="11">
    <location>
        <begin position="68"/>
        <end position="70"/>
    </location>
</feature>
<feature type="strand" evidence="13">
    <location>
        <begin position="73"/>
        <end position="78"/>
    </location>
</feature>
<feature type="helix" evidence="13">
    <location>
        <begin position="81"/>
        <end position="83"/>
    </location>
</feature>
<feature type="strand" evidence="13">
    <location>
        <begin position="87"/>
        <end position="96"/>
    </location>
</feature>
<feature type="strand" evidence="13">
    <location>
        <begin position="98"/>
        <end position="100"/>
    </location>
</feature>
<feature type="strand" evidence="13">
    <location>
        <begin position="105"/>
        <end position="121"/>
    </location>
</feature>
<feature type="strand" evidence="13">
    <location>
        <begin position="123"/>
        <end position="132"/>
    </location>
</feature>
<feature type="strand" evidence="13">
    <location>
        <begin position="140"/>
        <end position="144"/>
    </location>
</feature>
<feature type="helix" evidence="13">
    <location>
        <begin position="150"/>
        <end position="152"/>
    </location>
</feature>
<feature type="strand" evidence="13">
    <location>
        <begin position="153"/>
        <end position="157"/>
    </location>
</feature>
<feature type="turn" evidence="12">
    <location>
        <begin position="161"/>
        <end position="163"/>
    </location>
</feature>
<feature type="strand" evidence="13">
    <location>
        <begin position="170"/>
        <end position="177"/>
    </location>
</feature>
<feature type="strand" evidence="13">
    <location>
        <begin position="186"/>
        <end position="198"/>
    </location>
</feature>
<feature type="strand" evidence="13">
    <location>
        <begin position="202"/>
        <end position="205"/>
    </location>
</feature>
<feature type="strand" evidence="13">
    <location>
        <begin position="209"/>
        <end position="215"/>
    </location>
</feature>
<feature type="helix" evidence="13">
    <location>
        <begin position="227"/>
        <end position="229"/>
    </location>
</feature>
<feature type="turn" evidence="13">
    <location>
        <begin position="230"/>
        <end position="232"/>
    </location>
</feature>
<protein>
    <recommendedName>
        <fullName>Concanavalin-Br</fullName>
        <shortName>Con Br</shortName>
    </recommendedName>
</protein>
<organism>
    <name type="scientific">Canavalia brasiliensis</name>
    <name type="common">Brazilian jack bean</name>
    <dbReference type="NCBI Taxonomy" id="61861"/>
    <lineage>
        <taxon>Eukaryota</taxon>
        <taxon>Viridiplantae</taxon>
        <taxon>Streptophyta</taxon>
        <taxon>Embryophyta</taxon>
        <taxon>Tracheophyta</taxon>
        <taxon>Spermatophyta</taxon>
        <taxon>Magnoliopsida</taxon>
        <taxon>eudicotyledons</taxon>
        <taxon>Gunneridae</taxon>
        <taxon>Pentapetalae</taxon>
        <taxon>rosids</taxon>
        <taxon>fabids</taxon>
        <taxon>Fabales</taxon>
        <taxon>Fabaceae</taxon>
        <taxon>Papilionoideae</taxon>
        <taxon>50 kb inversion clade</taxon>
        <taxon>NPAAA clade</taxon>
        <taxon>indigoferoid/millettioid clade</taxon>
        <taxon>Phaseoleae</taxon>
        <taxon>Canavalia</taxon>
    </lineage>
</organism>
<dbReference type="PDB" id="1AZD">
    <property type="method" value="X-ray"/>
    <property type="resolution" value="3.00 A"/>
    <property type="chains" value="A/B/C/D=1-237"/>
</dbReference>
<dbReference type="PDB" id="1QDC">
    <property type="method" value="X-ray"/>
    <property type="resolution" value="2.00 A"/>
    <property type="chains" value="A/B/C/D=1-237"/>
</dbReference>
<dbReference type="PDB" id="1QDO">
    <property type="method" value="X-ray"/>
    <property type="resolution" value="2.80 A"/>
    <property type="chains" value="A/B/C/D=1-237"/>
</dbReference>
<dbReference type="PDB" id="2CYF">
    <property type="method" value="X-ray"/>
    <property type="resolution" value="1.80 A"/>
    <property type="chains" value="A/C=1-237"/>
</dbReference>
<dbReference type="PDB" id="3JU9">
    <property type="method" value="X-ray"/>
    <property type="resolution" value="2.10 A"/>
    <property type="chains" value="A=1-237"/>
</dbReference>
<dbReference type="PDB" id="4H55">
    <property type="method" value="X-ray"/>
    <property type="resolution" value="2.07 A"/>
    <property type="chains" value="A=1-237"/>
</dbReference>
<dbReference type="PDB" id="4P14">
    <property type="method" value="X-ray"/>
    <property type="resolution" value="2.00 A"/>
    <property type="chains" value="A=1-237"/>
</dbReference>
<dbReference type="PDB" id="4PCR">
    <property type="method" value="X-ray"/>
    <property type="resolution" value="2.15 A"/>
    <property type="chains" value="A/D=1-237"/>
</dbReference>
<dbReference type="PDB" id="5YGM">
    <property type="method" value="X-ray"/>
    <property type="resolution" value="1.60 A"/>
    <property type="chains" value="A=1-237"/>
</dbReference>
<dbReference type="PDB" id="6VB8">
    <property type="method" value="X-ray"/>
    <property type="resolution" value="2.20 A"/>
    <property type="chains" value="A=1-237"/>
</dbReference>
<dbReference type="PDB" id="8YJ9">
    <property type="method" value="X-ray"/>
    <property type="resolution" value="2.20 A"/>
    <property type="chains" value="A=1-237"/>
</dbReference>
<dbReference type="PDBsum" id="1AZD"/>
<dbReference type="PDBsum" id="1QDC"/>
<dbReference type="PDBsum" id="1QDO"/>
<dbReference type="PDBsum" id="2CYF"/>
<dbReference type="PDBsum" id="3JU9"/>
<dbReference type="PDBsum" id="4H55"/>
<dbReference type="PDBsum" id="4P14"/>
<dbReference type="PDBsum" id="4PCR"/>
<dbReference type="PDBsum" id="5YGM"/>
<dbReference type="PDBsum" id="6VB8"/>
<dbReference type="PDBsum" id="8YJ9"/>
<dbReference type="SMR" id="P55915"/>
<dbReference type="UniLectin" id="P55915"/>
<dbReference type="EvolutionaryTrace" id="P55915"/>
<dbReference type="GO" id="GO:0005537">
    <property type="term" value="F:D-mannose binding"/>
    <property type="evidence" value="ECO:0007669"/>
    <property type="project" value="UniProtKB-KW"/>
</dbReference>
<dbReference type="GO" id="GO:0046872">
    <property type="term" value="F:metal ion binding"/>
    <property type="evidence" value="ECO:0007669"/>
    <property type="project" value="UniProtKB-KW"/>
</dbReference>
<dbReference type="GO" id="GO:0090729">
    <property type="term" value="F:toxin activity"/>
    <property type="evidence" value="ECO:0007669"/>
    <property type="project" value="UniProtKB-KW"/>
</dbReference>
<dbReference type="CDD" id="cd06899">
    <property type="entry name" value="lectin_legume_LecRK_Arcelin_ConA"/>
    <property type="match status" value="1"/>
</dbReference>
<dbReference type="FunFam" id="2.60.120.200:FF:000227">
    <property type="entry name" value="Concanavalin-A"/>
    <property type="match status" value="1"/>
</dbReference>
<dbReference type="Gene3D" id="2.60.120.200">
    <property type="match status" value="1"/>
</dbReference>
<dbReference type="InterPro" id="IPR013320">
    <property type="entry name" value="ConA-like_dom_sf"/>
</dbReference>
<dbReference type="InterPro" id="IPR000985">
    <property type="entry name" value="Lectin_LegA_CS"/>
</dbReference>
<dbReference type="InterPro" id="IPR019825">
    <property type="entry name" value="Lectin_legB_Mn/Ca_BS"/>
</dbReference>
<dbReference type="InterPro" id="IPR001220">
    <property type="entry name" value="Legume_lectin_dom"/>
</dbReference>
<dbReference type="InterPro" id="IPR050258">
    <property type="entry name" value="Leguminous_Lectin"/>
</dbReference>
<dbReference type="PANTHER" id="PTHR32401">
    <property type="entry name" value="CONCANAVALIN A-LIKE LECTIN FAMILY PROTEIN"/>
    <property type="match status" value="1"/>
</dbReference>
<dbReference type="PANTHER" id="PTHR32401:SF47">
    <property type="entry name" value="LEGUME LECTIN DOMAIN-CONTAINING PROTEIN"/>
    <property type="match status" value="1"/>
</dbReference>
<dbReference type="Pfam" id="PF00139">
    <property type="entry name" value="Lectin_legB"/>
    <property type="match status" value="2"/>
</dbReference>
<dbReference type="SUPFAM" id="SSF49899">
    <property type="entry name" value="Concanavalin A-like lectins/glucanases"/>
    <property type="match status" value="1"/>
</dbReference>
<dbReference type="PROSITE" id="PS00308">
    <property type="entry name" value="LECTIN_LEGUME_ALPHA"/>
    <property type="match status" value="1"/>
</dbReference>
<dbReference type="PROSITE" id="PS00307">
    <property type="entry name" value="LECTIN_LEGUME_BETA"/>
    <property type="match status" value="1"/>
</dbReference>
<sequence length="237" mass="25568">ADTIVAVELDTYPNTDIGDPSYPHIGIDIKSVRSKKTAKWNMQNGKVGTAHIIYNSVGKRLSAVVSYPNGDSATVSYDVDLDNVLPEWVRVGLSASTGLYKETNTILSWSFTSKLKSNSTHETNALHFMFNQFSKDQKDLILQGDATTGTEGNLRLTRVSSNGSPQGSSVGRALFYAPVHIWESSAVVASFEATFTFLIKSPDSHPADGIAFFISNIDSSIPSGSTGRLLGLFPDAN</sequence>
<name>CONA_CANBR</name>
<accession>P55915</accession>
<comment type="function">
    <text evidence="3 4 5 6 7 8 9">Glucose/D-mannose specific lectin. Has anti-inflammatory activity in rats. Induces histamine release in mast cells from hamster and rat. Induces lymphocyte proliferation and IFNG production. Shows toxicity against the aquatic snail B.glabrata at concentrations higher than 20 ug/ml.</text>
</comment>
<comment type="subunit">
    <text evidence="2">Homotetramer.</text>
</comment>
<comment type="toxic dose">
    <text evidence="6">LD(50) is 15.4 ug/ml against the brine shrimp A.salina.</text>
</comment>
<comment type="miscellaneous">
    <text>Binds one manganese (or another transition metal) ion and one calcium ion. The metal ions are essential for the saccharide-binding and cell-agglutinating activities.</text>
</comment>
<comment type="miscellaneous">
    <text>Is being tested as a molluscicide with potential application in controlling schistosomiasis. The causative agent of schistosomiasis depends on freshwater snails of the genus Biomphalaria as hosts during its larval stages.</text>
</comment>
<comment type="similarity">
    <text evidence="10">Belongs to the leguminous lectin family.</text>
</comment>
<reference key="1">
    <citation type="thesis" date="1996" institute="Universidade Federale do Ceara" country="Brazil">
        <authorList>
            <person name="Grangeiro T.B."/>
        </authorList>
    </citation>
    <scope>PROTEIN SEQUENCE</scope>
    <source>
        <tissue>Seed</tissue>
    </source>
</reference>
<reference key="2">
    <citation type="journal article" date="1992" name="Immunol. Invest.">
        <title>Human lymphocyte stimulation by legume lectins from the Diocleae tribe.</title>
        <authorList>
            <person name="Barral-Netto M."/>
            <person name="Santos S.B."/>
            <person name="Barral A."/>
            <person name="Moreira L.I."/>
            <person name="Santos C.F."/>
            <person name="Moreira R.A."/>
            <person name="Oliveira J.T."/>
            <person name="Cavada B.S."/>
        </authorList>
    </citation>
    <scope>FUNCTION</scope>
</reference>
<reference key="3">
    <citation type="journal article" date="1994" name="Agents Actions">
        <title>Histamine release induced by glucose (mannose)-specific lectins isolated from Brazilian beans. Comparison with concanavalin A.</title>
        <authorList>
            <person name="Gomes J.C."/>
            <person name="Ferreira R.R."/>
            <person name="Cavada B.S."/>
            <person name="Moreira R.A."/>
            <person name="Oliveira J.T."/>
        </authorList>
    </citation>
    <scope>FUNCTION</scope>
    <scope>CALCIUM-BINDING</scope>
</reference>
<reference key="4">
    <citation type="journal article" date="1996" name="Inflamm. Res.">
        <title>Characteristics of the histamine release from hamster cheek pouch mast cells stimulated by lectins from Brazilian beans and concanavalin A.</title>
        <authorList>
            <person name="Ferreira R.R."/>
            <person name="Cavada B.S."/>
            <person name="Moreira R.A."/>
            <person name="Oliveira J.T."/>
            <person name="Gomes J.C."/>
        </authorList>
    </citation>
    <scope>FUNCTION</scope>
    <scope>CALCIUM-BINDING</scope>
</reference>
<reference key="5">
    <citation type="journal article" date="1997" name="Mediators Inflamm.">
        <title>Anti-inflammatory effect of glucose-mannose binding lectins isolated from Brazilian beans.</title>
        <authorList>
            <person name="Assreuy A.M."/>
            <person name="Shibuya M.D."/>
            <person name="Martins G.J."/>
            <person name="De Souza M.L."/>
            <person name="Cavada B.S."/>
            <person name="Moreira R.A."/>
            <person name="Oliveira J.T."/>
            <person name="Ribeiro R.A."/>
            <person name="Flores C.A."/>
        </authorList>
    </citation>
    <scope>FUNCTION</scope>
</reference>
<reference key="6">
    <citation type="journal article" date="1998" name="J. Biol. Chem.">
        <title>Diocleinae lectins are a group of proteins with conserved binding sites for the core trimannoside of asparagine-linked oligosaccharides and differential specificities for complex carbohydrates.</title>
        <authorList>
            <person name="Dam T.K."/>
            <person name="Cavada B.S."/>
            <person name="Grangeiro T.B."/>
            <person name="Santos C.F."/>
            <person name="de Sousa F.A.M."/>
            <person name="Oscarson S."/>
            <person name="Brewer C.F."/>
        </authorList>
    </citation>
    <scope>FUNCTION</scope>
</reference>
<reference key="7">
    <citation type="journal article" date="2000" name="Biochemistry">
        <title>Demonstration of a conserved histidine and two water ligands at the Mn2+ site in Diocleinae lectins by pulsed EPR spectroscopy.</title>
        <authorList>
            <person name="Lee H.C."/>
            <person name="Goroncy A.K."/>
            <person name="Peisach J."/>
            <person name="Cavada B.S."/>
            <person name="Grangeiro T.B."/>
            <person name="Ramos M.V."/>
            <person name="Sampaio A.H."/>
            <person name="Dam T.K."/>
            <person name="Brewer C.F."/>
        </authorList>
    </citation>
    <scope>MANGANESE-BINDING</scope>
</reference>
<reference key="8">
    <citation type="journal article" date="2000" name="J. Biol. Chem.">
        <title>Thermodynamic binding studies of lectins from the diocleinae subtribe to deoxy analogs of the core trimannoside of asparagine-linked oligosaccharides.</title>
        <authorList>
            <person name="Dam T.K."/>
            <person name="Cavada B.S."/>
            <person name="Grangeiro T.B."/>
            <person name="Santos C.F."/>
            <person name="Ceccatto V.M."/>
            <person name="de Sousa F.A."/>
            <person name="Oscarson S."/>
            <person name="Brewer C.F."/>
        </authorList>
    </citation>
    <scope>FUNCTION</scope>
</reference>
<reference key="9">
    <citation type="journal article" date="2010" name="Bioresour. Technol.">
        <title>Toxicity of some glucose/mannose-binding lectins to Biomphalaria glabrata and Artemia salina.</title>
        <authorList>
            <person name="dos Santos A.F."/>
            <person name="Cavada B.S."/>
            <person name="da Rocha B.A."/>
            <person name="do Nascimento K.S."/>
            <person name="Sant'Ana A.E."/>
        </authorList>
    </citation>
    <scope>FUNCTION</scope>
    <scope>TOXIC DOSE</scope>
</reference>
<reference key="10">
    <citation type="journal article" date="1997" name="FEBS Lett.">
        <title>The crystal structure of Canavalia brasiliensis lectin suggests a correlation between its quaternary conformation and its distinct biological properties from Concanavalin A.</title>
        <authorList>
            <person name="Sanz-Aparicio J."/>
            <person name="Hermoso J."/>
            <person name="Grangeiro T.B."/>
            <person name="Calvete J.J."/>
            <person name="Cavada B.S."/>
        </authorList>
    </citation>
    <scope>X-RAY CRYSTALLOGRAPHY (3.0 ANGSTROMS)</scope>
</reference>
<reference key="11">
    <citation type="journal article" date="1999" name="J. Biol. Chem.">
        <title>The crystal structures of Man(alpha1-3)Man(alpha1-O)Me and Man(alpha1-6)Man(alpha1-O)Me in complex with concanavalin A.</title>
        <authorList>
            <person name="Bouckaert J."/>
            <person name="Hamelryck T.W."/>
            <person name="Wyns L."/>
            <person name="Loris R."/>
        </authorList>
    </citation>
    <scope>X-RAY CRYSTALLOGRAPHY (2.0 ANGSTROMS) IN COMPLEX WITH CARBOHYDRATE</scope>
</reference>
<evidence type="ECO:0000250" key="1"/>
<evidence type="ECO:0000269" key="2">
    <source>
    </source>
</evidence>
<evidence type="ECO:0000269" key="3">
    <source>
    </source>
</evidence>
<evidence type="ECO:0000269" key="4">
    <source>
    </source>
</evidence>
<evidence type="ECO:0000269" key="5">
    <source>
    </source>
</evidence>
<evidence type="ECO:0000269" key="6">
    <source>
    </source>
</evidence>
<evidence type="ECO:0000269" key="7">
    <source>
    </source>
</evidence>
<evidence type="ECO:0000269" key="8">
    <source>
    </source>
</evidence>
<evidence type="ECO:0000269" key="9">
    <source>
    </source>
</evidence>
<evidence type="ECO:0000305" key="10"/>
<evidence type="ECO:0007829" key="11">
    <source>
        <dbReference type="PDB" id="1QDO"/>
    </source>
</evidence>
<evidence type="ECO:0007829" key="12">
    <source>
        <dbReference type="PDB" id="4H55"/>
    </source>
</evidence>
<evidence type="ECO:0007829" key="13">
    <source>
        <dbReference type="PDB" id="5YGM"/>
    </source>
</evidence>
<keyword id="KW-0002">3D-structure</keyword>
<keyword id="KW-0106">Calcium</keyword>
<keyword id="KW-0903">Direct protein sequencing</keyword>
<keyword id="KW-0430">Lectin</keyword>
<keyword id="KW-0464">Manganese</keyword>
<keyword id="KW-0465">Mannose-binding</keyword>
<keyword id="KW-0479">Metal-binding</keyword>
<keyword id="KW-0800">Toxin</keyword>